<protein>
    <recommendedName>
        <fullName evidence="1">Large ribosomal subunit protein bL27</fullName>
    </recommendedName>
    <alternativeName>
        <fullName evidence="3">50S ribosomal protein L27</fullName>
    </alternativeName>
</protein>
<comment type="similarity">
    <text evidence="1">Belongs to the bacterial ribosomal protein bL27 family.</text>
</comment>
<feature type="chain" id="PRO_1000211920" description="Large ribosomal subunit protein bL27">
    <location>
        <begin position="1"/>
        <end position="91"/>
    </location>
</feature>
<feature type="region of interest" description="Disordered" evidence="2">
    <location>
        <begin position="1"/>
        <end position="25"/>
    </location>
</feature>
<sequence length="91" mass="9788">MAHKKGAASSNNGRDSESKRLGVKRFGGQQVKAGEILVRQRGTSFHPGENVGRGGDDTLFALKAGAVQFARKRNRRTVNIVENVEAEPAKA</sequence>
<dbReference type="EMBL" id="CP001620">
    <property type="protein sequence ID" value="ACR18100.1"/>
    <property type="molecule type" value="Genomic_DNA"/>
</dbReference>
<dbReference type="RefSeq" id="WP_012731987.1">
    <property type="nucleotide sequence ID" value="NC_012704.1"/>
</dbReference>
<dbReference type="SMR" id="C4LJU5"/>
<dbReference type="STRING" id="645127.ckrop_1359"/>
<dbReference type="GeneID" id="92726235"/>
<dbReference type="KEGG" id="ckp:ckrop_1359"/>
<dbReference type="eggNOG" id="COG0211">
    <property type="taxonomic scope" value="Bacteria"/>
</dbReference>
<dbReference type="HOGENOM" id="CLU_095424_4_0_11"/>
<dbReference type="OrthoDB" id="9803474at2"/>
<dbReference type="Proteomes" id="UP000001473">
    <property type="component" value="Chromosome"/>
</dbReference>
<dbReference type="GO" id="GO:0022625">
    <property type="term" value="C:cytosolic large ribosomal subunit"/>
    <property type="evidence" value="ECO:0007669"/>
    <property type="project" value="TreeGrafter"/>
</dbReference>
<dbReference type="GO" id="GO:0003735">
    <property type="term" value="F:structural constituent of ribosome"/>
    <property type="evidence" value="ECO:0007669"/>
    <property type="project" value="InterPro"/>
</dbReference>
<dbReference type="GO" id="GO:0006412">
    <property type="term" value="P:translation"/>
    <property type="evidence" value="ECO:0007669"/>
    <property type="project" value="UniProtKB-UniRule"/>
</dbReference>
<dbReference type="FunFam" id="2.40.50.100:FF:000020">
    <property type="entry name" value="50S ribosomal protein L27"/>
    <property type="match status" value="1"/>
</dbReference>
<dbReference type="Gene3D" id="2.40.50.100">
    <property type="match status" value="1"/>
</dbReference>
<dbReference type="HAMAP" id="MF_00539">
    <property type="entry name" value="Ribosomal_bL27"/>
    <property type="match status" value="1"/>
</dbReference>
<dbReference type="InterPro" id="IPR001684">
    <property type="entry name" value="Ribosomal_bL27"/>
</dbReference>
<dbReference type="InterPro" id="IPR018261">
    <property type="entry name" value="Ribosomal_bL27_CS"/>
</dbReference>
<dbReference type="NCBIfam" id="TIGR00062">
    <property type="entry name" value="L27"/>
    <property type="match status" value="1"/>
</dbReference>
<dbReference type="PANTHER" id="PTHR15893:SF0">
    <property type="entry name" value="LARGE RIBOSOMAL SUBUNIT PROTEIN BL27M"/>
    <property type="match status" value="1"/>
</dbReference>
<dbReference type="PANTHER" id="PTHR15893">
    <property type="entry name" value="RIBOSOMAL PROTEIN L27"/>
    <property type="match status" value="1"/>
</dbReference>
<dbReference type="Pfam" id="PF01016">
    <property type="entry name" value="Ribosomal_L27"/>
    <property type="match status" value="1"/>
</dbReference>
<dbReference type="PRINTS" id="PR00063">
    <property type="entry name" value="RIBOSOMALL27"/>
</dbReference>
<dbReference type="SUPFAM" id="SSF110324">
    <property type="entry name" value="Ribosomal L27 protein-like"/>
    <property type="match status" value="1"/>
</dbReference>
<dbReference type="PROSITE" id="PS00831">
    <property type="entry name" value="RIBOSOMAL_L27"/>
    <property type="match status" value="1"/>
</dbReference>
<proteinExistence type="inferred from homology"/>
<name>RL27_CORK4</name>
<accession>C4LJU5</accession>
<keyword id="KW-1185">Reference proteome</keyword>
<keyword id="KW-0687">Ribonucleoprotein</keyword>
<keyword id="KW-0689">Ribosomal protein</keyword>
<organism>
    <name type="scientific">Corynebacterium kroppenstedtii (strain DSM 44385 / JCM 11950 / CIP 105744 / CCUG 35717)</name>
    <dbReference type="NCBI Taxonomy" id="645127"/>
    <lineage>
        <taxon>Bacteria</taxon>
        <taxon>Bacillati</taxon>
        <taxon>Actinomycetota</taxon>
        <taxon>Actinomycetes</taxon>
        <taxon>Mycobacteriales</taxon>
        <taxon>Corynebacteriaceae</taxon>
        <taxon>Corynebacterium</taxon>
    </lineage>
</organism>
<gene>
    <name evidence="1" type="primary">rpmA</name>
    <name type="ordered locus">ckrop_1359</name>
</gene>
<reference key="1">
    <citation type="journal article" date="2008" name="J. Biotechnol.">
        <title>Ultrafast pyrosequencing of Corynebacterium kroppenstedtii DSM44385 revealed insights into the physiology of a lipophilic corynebacterium that lacks mycolic acids.</title>
        <authorList>
            <person name="Tauch A."/>
            <person name="Schneider J."/>
            <person name="Szczepanowski R."/>
            <person name="Tilker A."/>
            <person name="Viehoever P."/>
            <person name="Gartemann K.-H."/>
            <person name="Arnold W."/>
            <person name="Blom J."/>
            <person name="Brinkrolf K."/>
            <person name="Brune I."/>
            <person name="Goetker S."/>
            <person name="Weisshaar B."/>
            <person name="Goesmann A."/>
            <person name="Droege M."/>
            <person name="Puehler A."/>
        </authorList>
    </citation>
    <scope>NUCLEOTIDE SEQUENCE [LARGE SCALE GENOMIC DNA]</scope>
    <source>
        <strain>DSM 44385 / JCM 11950 / CIP 105744 / CCUG 35717</strain>
    </source>
</reference>
<evidence type="ECO:0000255" key="1">
    <source>
        <dbReference type="HAMAP-Rule" id="MF_00539"/>
    </source>
</evidence>
<evidence type="ECO:0000256" key="2">
    <source>
        <dbReference type="SAM" id="MobiDB-lite"/>
    </source>
</evidence>
<evidence type="ECO:0000305" key="3"/>